<feature type="chain" id="PRO_0000395560" description="Peptidyl-Asp metalloendopeptidase">
    <location>
        <begin position="1" status="less than"/>
        <end position="144"/>
    </location>
</feature>
<feature type="active site" evidence="1 2">
    <location>
        <position position="65"/>
    </location>
</feature>
<feature type="binding site" evidence="1 2">
    <location>
        <position position="64"/>
    </location>
    <ligand>
        <name>Zn(2+)</name>
        <dbReference type="ChEBI" id="CHEBI:29105"/>
        <note>catalytic</note>
    </ligand>
</feature>
<feature type="binding site" evidence="1 2">
    <location>
        <position position="68"/>
    </location>
    <ligand>
        <name>Zn(2+)</name>
        <dbReference type="ChEBI" id="CHEBI:29105"/>
        <note>catalytic</note>
    </ligand>
</feature>
<feature type="non-consecutive residues" evidence="6">
    <location>
        <begin position="13"/>
        <end position="14"/>
    </location>
</feature>
<feature type="non-consecutive residues" evidence="6">
    <location>
        <begin position="40"/>
        <end position="41"/>
    </location>
</feature>
<feature type="non-consecutive residues" evidence="6">
    <location>
        <begin position="53"/>
        <end position="54"/>
    </location>
</feature>
<feature type="non-consecutive residues" evidence="6">
    <location>
        <begin position="73"/>
        <end position="74"/>
    </location>
</feature>
<feature type="non-consecutive residues" evidence="6">
    <location>
        <begin position="127"/>
        <end position="128"/>
    </location>
</feature>
<feature type="non-terminal residue" evidence="6">
    <location>
        <position position="1"/>
    </location>
</feature>
<keyword id="KW-0903">Direct protein sequencing</keyword>
<keyword id="KW-0378">Hydrolase</keyword>
<keyword id="KW-0479">Metal-binding</keyword>
<keyword id="KW-0482">Metalloprotease</keyword>
<keyword id="KW-0645">Protease</keyword>
<keyword id="KW-0862">Zinc</keyword>
<proteinExistence type="evidence at protein level"/>
<dbReference type="EC" id="3.4.24.33"/>
<dbReference type="GO" id="GO:0046872">
    <property type="term" value="F:metal ion binding"/>
    <property type="evidence" value="ECO:0007669"/>
    <property type="project" value="UniProtKB-KW"/>
</dbReference>
<dbReference type="GO" id="GO:0008237">
    <property type="term" value="F:metallopeptidase activity"/>
    <property type="evidence" value="ECO:0007669"/>
    <property type="project" value="UniProtKB-KW"/>
</dbReference>
<dbReference type="GO" id="GO:0006508">
    <property type="term" value="P:proteolysis"/>
    <property type="evidence" value="ECO:0007669"/>
    <property type="project" value="UniProtKB-KW"/>
</dbReference>
<dbReference type="Pfam" id="PF13688">
    <property type="entry name" value="Reprolysin_5"/>
    <property type="match status" value="1"/>
</dbReference>
<dbReference type="PROSITE" id="PS00142">
    <property type="entry name" value="ZINC_PROTEASE"/>
    <property type="match status" value="1"/>
</dbReference>
<sequence>ESNQGYVNSNVGIELARYETTNYTESGSFDTDLARFRGTSDSIHTSRNTYTAADCATGYYSFAHEIGHLQSARDIATDSSTSPYAYGHGYRYEPATGWRTIMAYNCTRSCPRLNYWSNPNISYDIGPDNQRVLVNTKATIAAFR</sequence>
<organism>
    <name type="scientific">Pseudomonas fragi</name>
    <dbReference type="NCBI Taxonomy" id="296"/>
    <lineage>
        <taxon>Bacteria</taxon>
        <taxon>Pseudomonadati</taxon>
        <taxon>Pseudomonadota</taxon>
        <taxon>Gammaproteobacteria</taxon>
        <taxon>Pseudomonadales</taxon>
        <taxon>Pseudomonadaceae</taxon>
        <taxon>Pseudomonas</taxon>
    </lineage>
</organism>
<reference evidence="7" key="1">
    <citation type="journal article" date="1995" name="Methods Enzymol.">
        <title>Peptidyl-Asp metalloendopeptidase.</title>
        <authorList>
            <person name="Hagmann M.L."/>
            <person name="Geuss U."/>
            <person name="Fischer S."/>
            <person name="Kresse G.B."/>
        </authorList>
    </citation>
    <scope>PROTEIN SEQUENCE</scope>
</reference>
<reference evidence="7" key="2">
    <citation type="journal article" date="1980" name="J. Biol. Chem.">
        <title>Substrate specificity of a proteolytic enzyme isolated from a mutant of Pseudomonas fragi.</title>
        <authorList>
            <person name="Drapeau G.R."/>
        </authorList>
    </citation>
    <scope>FUNCTION</scope>
    <scope>CATALYTIC ACTIVITY</scope>
</reference>
<reference evidence="7" key="3">
    <citation type="journal article" date="1989" name="Biochem. Biophys. Res. Commun.">
        <title>Specificity of endoproteinase Asp-N (Pseudomonas fragi): cleavage at glutamyl residues in two proteins.</title>
        <authorList>
            <person name="Ingrosso D."/>
            <person name="Fowler A.V."/>
            <person name="Bleibaum J."/>
            <person name="Clarke S."/>
        </authorList>
    </citation>
    <scope>FUNCTION</scope>
    <scope>CATALYTIC ACTIVITY</scope>
</reference>
<name>ASPN_PSEFR</name>
<comment type="function">
    <text evidence="3 4">Metalloprotease, specifically cleaves on the N-terminal side of aspartyl, glutamyl and cysteic acid residues.</text>
</comment>
<comment type="catalytic activity">
    <reaction evidence="3 4">
        <text>Cleavage of Xaa-|-Asp, Xaa-|-Glu and Xaa-|-cysteic acid bonds.</text>
        <dbReference type="EC" id="3.4.24.33"/>
    </reaction>
</comment>
<comment type="cofactor">
    <cofactor evidence="1">
        <name>Zn(2+)</name>
        <dbReference type="ChEBI" id="CHEBI:29105"/>
    </cofactor>
    <text evidence="1">Binds 1 zinc ion per subunit.</text>
</comment>
<comment type="similarity">
    <text evidence="7">Belongs to the peptidase M72 family.</text>
</comment>
<evidence type="ECO:0000250" key="1">
    <source>
        <dbReference type="UniProtKB" id="O75173"/>
    </source>
</evidence>
<evidence type="ECO:0000255" key="2">
    <source>
        <dbReference type="PROSITE-ProRule" id="PRU10095"/>
    </source>
</evidence>
<evidence type="ECO:0000269" key="3">
    <source>
    </source>
</evidence>
<evidence type="ECO:0000269" key="4">
    <source>
    </source>
</evidence>
<evidence type="ECO:0000303" key="5">
    <source>
    </source>
</evidence>
<evidence type="ECO:0000303" key="6">
    <source>
    </source>
</evidence>
<evidence type="ECO:0000305" key="7"/>
<accession>Q9R4J4</accession>
<accession>Q9R4J5</accession>
<accession>Q9R4J6</accession>
<accession>Q9R4J7</accession>
<protein>
    <recommendedName>
        <fullName evidence="6">Peptidyl-Asp metalloendopeptidase</fullName>
        <ecNumber>3.4.24.33</ecNumber>
    </recommendedName>
    <alternativeName>
        <fullName evidence="5 6">Endopeptidase Asp-N</fullName>
    </alternativeName>
</protein>